<comment type="function">
    <text evidence="1">A cytochrome P450 monooxygenase involved in the metabolism of endogenous cholesterol and its oxygenated derivatives (oxysterols). Mechanistically, uses molecular oxygen inserting one oxygen atom into a substrate, and reducing the second into a water molecule, with two electrons provided by NADPH via cytochrome P450 reductase (CPR; NADPH-ferrihemoprotein reductase). Functions as a critical regulatory enzyme of bile acid biosynthesis and cholesterol homeostasis. Catalyzes the hydroxylation of carbon hydrogen bond at 7-alpha position of cholesterol, a rate-limiting step in cholesterol catabolism and bile acid biosynthesis. 7-alpha hydroxylates several oxysterols, including 4beta-hydroxycholesterol and 24-hydroxycholesterol. Catalyzes the oxidation of the 7,8 double bond of 7-dehydrocholesterol and lathosterol with direct and predominant formation of the 7-keto derivatives.</text>
</comment>
<comment type="catalytic activity">
    <reaction evidence="1">
        <text>cholesterol + reduced [NADPH--hemoprotein reductase] + O2 = 7alpha-hydroxycholesterol + oxidized [NADPH--hemoprotein reductase] + H2O + H(+)</text>
        <dbReference type="Rhea" id="RHEA:21812"/>
        <dbReference type="Rhea" id="RHEA-COMP:11964"/>
        <dbReference type="Rhea" id="RHEA-COMP:11965"/>
        <dbReference type="ChEBI" id="CHEBI:15377"/>
        <dbReference type="ChEBI" id="CHEBI:15378"/>
        <dbReference type="ChEBI" id="CHEBI:15379"/>
        <dbReference type="ChEBI" id="CHEBI:16113"/>
        <dbReference type="ChEBI" id="CHEBI:17500"/>
        <dbReference type="ChEBI" id="CHEBI:57618"/>
        <dbReference type="ChEBI" id="CHEBI:58210"/>
        <dbReference type="EC" id="1.14.14.23"/>
    </reaction>
    <physiologicalReaction direction="left-to-right" evidence="1">
        <dbReference type="Rhea" id="RHEA:21813"/>
    </physiologicalReaction>
</comment>
<comment type="catalytic activity">
    <reaction evidence="1">
        <text>4beta-hydroxycholesterol + reduced [NADPH--hemoprotein reductase] + O2 = 4beta,7alpha-dihydroxycholesterol + oxidized [NADPH--hemoprotein reductase] + H2O + H(+)</text>
        <dbReference type="Rhea" id="RHEA:46120"/>
        <dbReference type="Rhea" id="RHEA-COMP:11964"/>
        <dbReference type="Rhea" id="RHEA-COMP:11965"/>
        <dbReference type="ChEBI" id="CHEBI:15377"/>
        <dbReference type="ChEBI" id="CHEBI:15378"/>
        <dbReference type="ChEBI" id="CHEBI:15379"/>
        <dbReference type="ChEBI" id="CHEBI:57618"/>
        <dbReference type="ChEBI" id="CHEBI:58210"/>
        <dbReference type="ChEBI" id="CHEBI:85778"/>
        <dbReference type="ChEBI" id="CHEBI:85779"/>
    </reaction>
    <physiologicalReaction direction="left-to-right" evidence="1">
        <dbReference type="Rhea" id="RHEA:46121"/>
    </physiologicalReaction>
</comment>
<comment type="catalytic activity">
    <reaction evidence="1">
        <text>lathosterol + reduced [NADPH--hemoprotein reductase] + O2 = 7alpha,8alpha-epoxy-5alpha-cholestan-3beta-ol + oxidized [NADPH--hemoprotein reductase] + H2O + H(+)</text>
        <dbReference type="Rhea" id="RHEA:53256"/>
        <dbReference type="Rhea" id="RHEA-COMP:11964"/>
        <dbReference type="Rhea" id="RHEA-COMP:11965"/>
        <dbReference type="ChEBI" id="CHEBI:15377"/>
        <dbReference type="ChEBI" id="CHEBI:15378"/>
        <dbReference type="ChEBI" id="CHEBI:15379"/>
        <dbReference type="ChEBI" id="CHEBI:17168"/>
        <dbReference type="ChEBI" id="CHEBI:57618"/>
        <dbReference type="ChEBI" id="CHEBI:58210"/>
        <dbReference type="ChEBI" id="CHEBI:137063"/>
    </reaction>
    <physiologicalReaction direction="left-to-right" evidence="1">
        <dbReference type="Rhea" id="RHEA:53257"/>
    </physiologicalReaction>
</comment>
<comment type="catalytic activity">
    <reaction evidence="1">
        <text>lathosterol + reduced [NADPH--hemoprotein reductase] + O2 = 5alpha-cholestan-7-oxo-3beta-ol + oxidized [NADPH--hemoprotein reductase] + H2O + H(+)</text>
        <dbReference type="Rhea" id="RHEA:53252"/>
        <dbReference type="Rhea" id="RHEA-COMP:11964"/>
        <dbReference type="Rhea" id="RHEA-COMP:11965"/>
        <dbReference type="ChEBI" id="CHEBI:15377"/>
        <dbReference type="ChEBI" id="CHEBI:15378"/>
        <dbReference type="ChEBI" id="CHEBI:15379"/>
        <dbReference type="ChEBI" id="CHEBI:17168"/>
        <dbReference type="ChEBI" id="CHEBI:57618"/>
        <dbReference type="ChEBI" id="CHEBI:58210"/>
        <dbReference type="ChEBI" id="CHEBI:137062"/>
    </reaction>
    <physiologicalReaction direction="left-to-right" evidence="1">
        <dbReference type="Rhea" id="RHEA:53253"/>
    </physiologicalReaction>
</comment>
<comment type="catalytic activity">
    <reaction evidence="1">
        <text>7-dehydrocholesterol + reduced [NADPH--hemoprotein reductase] + O2 = 7-oxocholesterol + oxidized [NADPH--hemoprotein reductase] + H2O + H(+)</text>
        <dbReference type="Rhea" id="RHEA:53248"/>
        <dbReference type="Rhea" id="RHEA-COMP:11964"/>
        <dbReference type="Rhea" id="RHEA-COMP:11965"/>
        <dbReference type="ChEBI" id="CHEBI:15377"/>
        <dbReference type="ChEBI" id="CHEBI:15378"/>
        <dbReference type="ChEBI" id="CHEBI:15379"/>
        <dbReference type="ChEBI" id="CHEBI:17759"/>
        <dbReference type="ChEBI" id="CHEBI:57618"/>
        <dbReference type="ChEBI" id="CHEBI:58210"/>
        <dbReference type="ChEBI" id="CHEBI:64294"/>
    </reaction>
    <physiologicalReaction direction="left-to-right" evidence="1">
        <dbReference type="Rhea" id="RHEA:53249"/>
    </physiologicalReaction>
</comment>
<comment type="catalytic activity">
    <reaction evidence="1">
        <text>(24S)-hydroxycholesterol + reduced [NADPH--hemoprotein reductase] + O2 = (24S)-7alpha-dihydroxycholesterol + oxidized [NADPH--hemoprotein reductase] + H2O + H(+)</text>
        <dbReference type="Rhea" id="RHEA:46124"/>
        <dbReference type="Rhea" id="RHEA-COMP:11964"/>
        <dbReference type="Rhea" id="RHEA-COMP:11965"/>
        <dbReference type="ChEBI" id="CHEBI:15377"/>
        <dbReference type="ChEBI" id="CHEBI:15378"/>
        <dbReference type="ChEBI" id="CHEBI:15379"/>
        <dbReference type="ChEBI" id="CHEBI:34310"/>
        <dbReference type="ChEBI" id="CHEBI:37640"/>
        <dbReference type="ChEBI" id="CHEBI:57618"/>
        <dbReference type="ChEBI" id="CHEBI:58210"/>
        <dbReference type="EC" id="1.14.14.26"/>
    </reaction>
    <physiologicalReaction direction="left-to-right" evidence="1">
        <dbReference type="Rhea" id="RHEA:46125"/>
    </physiologicalReaction>
</comment>
<comment type="catalytic activity">
    <reaction evidence="1">
        <text>(24R)-hydroxycholesterol + reduced [NADPH--hemoprotein reductase] + O2 = (24R)-7alpha-dihydroxycholesterol + oxidized [NADPH--hemoprotein reductase] + H2O + H(+)</text>
        <dbReference type="Rhea" id="RHEA:16093"/>
        <dbReference type="Rhea" id="RHEA-COMP:11964"/>
        <dbReference type="Rhea" id="RHEA-COMP:11965"/>
        <dbReference type="ChEBI" id="CHEBI:15377"/>
        <dbReference type="ChEBI" id="CHEBI:15378"/>
        <dbReference type="ChEBI" id="CHEBI:15379"/>
        <dbReference type="ChEBI" id="CHEBI:50516"/>
        <dbReference type="ChEBI" id="CHEBI:50518"/>
        <dbReference type="ChEBI" id="CHEBI:57618"/>
        <dbReference type="ChEBI" id="CHEBI:58210"/>
    </reaction>
    <physiologicalReaction direction="left-to-right" evidence="1">
        <dbReference type="Rhea" id="RHEA:16094"/>
    </physiologicalReaction>
</comment>
<comment type="cofactor">
    <cofactor evidence="1">
        <name>heme</name>
        <dbReference type="ChEBI" id="CHEBI:30413"/>
    </cofactor>
</comment>
<comment type="pathway">
    <text evidence="1">Lipid metabolism; bile acid biosynthesis.</text>
</comment>
<comment type="pathway">
    <text evidence="1">Steroid metabolism; cholesterol degradation.</text>
</comment>
<comment type="subcellular location">
    <subcellularLocation>
        <location evidence="1">Endoplasmic reticulum membrane</location>
        <topology evidence="1">Single-pass membrane protein</topology>
    </subcellularLocation>
    <subcellularLocation>
        <location evidence="1">Microsome membrane</location>
        <topology evidence="1">Single-pass membrane protein</topology>
    </subcellularLocation>
</comment>
<comment type="similarity">
    <text evidence="3">Belongs to the cytochrome P450 family.</text>
</comment>
<proteinExistence type="inferred from homology"/>
<organism>
    <name type="scientific">Sus scrofa</name>
    <name type="common">Pig</name>
    <dbReference type="NCBI Taxonomy" id="9823"/>
    <lineage>
        <taxon>Eukaryota</taxon>
        <taxon>Metazoa</taxon>
        <taxon>Chordata</taxon>
        <taxon>Craniata</taxon>
        <taxon>Vertebrata</taxon>
        <taxon>Euteleostomi</taxon>
        <taxon>Mammalia</taxon>
        <taxon>Eutheria</taxon>
        <taxon>Laurasiatheria</taxon>
        <taxon>Artiodactyla</taxon>
        <taxon>Suina</taxon>
        <taxon>Suidae</taxon>
        <taxon>Sus</taxon>
    </lineage>
</organism>
<name>CP7A1_PIG</name>
<sequence>MMSISLLGGIVTAVCCCLWLLLGMRRRQTGEPPLENGIIPYLGCALQFGANPLEFLRANQRKHGHIFTCQLMGNYVHFITNPLSYHKVLCHGKYLDWKKFHFTASAKAFGHRSIDPSDGNTTDNINKTIIKTLQGDALNLLAAAMMENLQLVLRPQVAPQPEKPAWVTEGMYSFCYRVMFEAGYVTLFGKDPIGHDAQKALILNNLDNFKQFDKIFPALVAGFPIHVFKTGHYAREKLAEGLRLQKLRKRDHISELVRFLNDTLSTLDDAEKAKSLLAVLWASQANTIPATFWCLFQTIRSPEAMKAASEEVNKTLEKAGQKISLDDKPIYLNQIELDSMPVLDSIIKESLRLSSASLNIRTAKEDFTLHLQDGSYNIRKDDIIALYPQLMHLDPEIYPDPLTFKYDRYLDENGKTKTTFYSHGLKLKYYYMPFGSGATICPGRLFAVQEIKQFLILMLSYFDLELVESHVKCPPLDQSRAGLGILPPSNDIEFRYKLKHL</sequence>
<dbReference type="EC" id="1.14.14.26" evidence="1"/>
<dbReference type="EC" id="1.14.14.23" evidence="1"/>
<dbReference type="EMBL" id="AF020322">
    <property type="protein sequence ID" value="AAC04676.1"/>
    <property type="molecule type" value="Genomic_DNA"/>
</dbReference>
<dbReference type="EMBL" id="AF020317">
    <property type="protein sequence ID" value="AAC04676.1"/>
    <property type="status" value="JOINED"/>
    <property type="molecule type" value="Genomic_DNA"/>
</dbReference>
<dbReference type="EMBL" id="AF020318">
    <property type="protein sequence ID" value="AAC04676.1"/>
    <property type="status" value="JOINED"/>
    <property type="molecule type" value="Genomic_DNA"/>
</dbReference>
<dbReference type="EMBL" id="AF020319">
    <property type="protein sequence ID" value="AAC04676.1"/>
    <property type="status" value="JOINED"/>
    <property type="molecule type" value="Genomic_DNA"/>
</dbReference>
<dbReference type="EMBL" id="AF020320">
    <property type="protein sequence ID" value="AAC04676.1"/>
    <property type="status" value="JOINED"/>
    <property type="molecule type" value="Genomic_DNA"/>
</dbReference>
<dbReference type="EMBL" id="AF020321">
    <property type="protein sequence ID" value="AAC04676.1"/>
    <property type="status" value="JOINED"/>
    <property type="molecule type" value="Genomic_DNA"/>
</dbReference>
<dbReference type="SMR" id="O46491"/>
<dbReference type="FunCoup" id="O46491">
    <property type="interactions" value="43"/>
</dbReference>
<dbReference type="STRING" id="9823.ENSSSCP00000033898"/>
<dbReference type="PaxDb" id="9823-ENSSSCP00000006650"/>
<dbReference type="Ensembl" id="ENSSSCT00025061478.1">
    <property type="protein sequence ID" value="ENSSSCP00025026104.1"/>
    <property type="gene ID" value="ENSSSCG00025045274.1"/>
</dbReference>
<dbReference type="Ensembl" id="ENSSSCT00035036823.1">
    <property type="protein sequence ID" value="ENSSSCP00035014675.1"/>
    <property type="gene ID" value="ENSSSCG00035027837.1"/>
</dbReference>
<dbReference type="Ensembl" id="ENSSSCT00055009982.1">
    <property type="protein sequence ID" value="ENSSSCP00055007897.1"/>
    <property type="gene ID" value="ENSSSCG00055005084.1"/>
</dbReference>
<dbReference type="Ensembl" id="ENSSSCT00070004802.1">
    <property type="protein sequence ID" value="ENSSSCP00070003923.1"/>
    <property type="gene ID" value="ENSSSCG00070002514.1"/>
</dbReference>
<dbReference type="Ensembl" id="ENSSSCT00090035196">
    <property type="protein sequence ID" value="ENSSSCP00090021948"/>
    <property type="gene ID" value="ENSSSCG00090019853"/>
</dbReference>
<dbReference type="Ensembl" id="ENSSSCT00105004247">
    <property type="protein sequence ID" value="ENSSSCP00105003087"/>
    <property type="gene ID" value="ENSSSCG00105002222"/>
</dbReference>
<dbReference type="Ensembl" id="ENSSSCT00130024499">
    <property type="protein sequence ID" value="ENSSSCP00130018445"/>
    <property type="gene ID" value="ENSSSCG00130013220"/>
</dbReference>
<dbReference type="eggNOG" id="KOG0684">
    <property type="taxonomic scope" value="Eukaryota"/>
</dbReference>
<dbReference type="InParanoid" id="O46491"/>
<dbReference type="Reactome" id="R-SSC-192105">
    <property type="pathway name" value="Synthesis of bile acids and bile salts"/>
</dbReference>
<dbReference type="Reactome" id="R-SSC-193368">
    <property type="pathway name" value="Synthesis of bile acids and bile salts via 7alpha-hydroxycholesterol"/>
</dbReference>
<dbReference type="Reactome" id="R-SSC-193807">
    <property type="pathway name" value="Synthesis of bile acids and bile salts via 27-hydroxycholesterol"/>
</dbReference>
<dbReference type="Reactome" id="R-SSC-211976">
    <property type="pathway name" value="Endogenous sterols"/>
</dbReference>
<dbReference type="UniPathway" id="UPA00221"/>
<dbReference type="UniPathway" id="UPA01058"/>
<dbReference type="Proteomes" id="UP000008227">
    <property type="component" value="Unplaced"/>
</dbReference>
<dbReference type="Proteomes" id="UP000314985">
    <property type="component" value="Chromosome 4"/>
</dbReference>
<dbReference type="Proteomes" id="UP000694570">
    <property type="component" value="Unplaced"/>
</dbReference>
<dbReference type="Proteomes" id="UP000694571">
    <property type="component" value="Unplaced"/>
</dbReference>
<dbReference type="Proteomes" id="UP000694720">
    <property type="component" value="Unplaced"/>
</dbReference>
<dbReference type="Proteomes" id="UP000694722">
    <property type="component" value="Unplaced"/>
</dbReference>
<dbReference type="Proteomes" id="UP000694723">
    <property type="component" value="Unplaced"/>
</dbReference>
<dbReference type="Proteomes" id="UP000694724">
    <property type="component" value="Unplaced"/>
</dbReference>
<dbReference type="Proteomes" id="UP000694725">
    <property type="component" value="Unplaced"/>
</dbReference>
<dbReference type="Proteomes" id="UP000694726">
    <property type="component" value="Unplaced"/>
</dbReference>
<dbReference type="Proteomes" id="UP000694727">
    <property type="component" value="Unplaced"/>
</dbReference>
<dbReference type="Proteomes" id="UP000694728">
    <property type="component" value="Unplaced"/>
</dbReference>
<dbReference type="GO" id="GO:0005789">
    <property type="term" value="C:endoplasmic reticulum membrane"/>
    <property type="evidence" value="ECO:0007669"/>
    <property type="project" value="UniProtKB-SubCell"/>
</dbReference>
<dbReference type="GO" id="GO:0043231">
    <property type="term" value="C:intracellular membrane-bounded organelle"/>
    <property type="evidence" value="ECO:0000250"/>
    <property type="project" value="UniProtKB"/>
</dbReference>
<dbReference type="GO" id="GO:0033782">
    <property type="term" value="F:24S-hydroxycholesterol 7-alpha-hydroxylase activity"/>
    <property type="evidence" value="ECO:0007669"/>
    <property type="project" value="UniProtKB-EC"/>
</dbReference>
<dbReference type="GO" id="GO:0008123">
    <property type="term" value="F:cholesterol 7-alpha-monooxygenase activity"/>
    <property type="evidence" value="ECO:0000250"/>
    <property type="project" value="UniProtKB"/>
</dbReference>
<dbReference type="GO" id="GO:0020037">
    <property type="term" value="F:heme binding"/>
    <property type="evidence" value="ECO:0007669"/>
    <property type="project" value="InterPro"/>
</dbReference>
<dbReference type="GO" id="GO:0005506">
    <property type="term" value="F:iron ion binding"/>
    <property type="evidence" value="ECO:0007669"/>
    <property type="project" value="InterPro"/>
</dbReference>
<dbReference type="GO" id="GO:0006699">
    <property type="term" value="P:bile acid biosynthetic process"/>
    <property type="evidence" value="ECO:0000250"/>
    <property type="project" value="UniProtKB"/>
</dbReference>
<dbReference type="GO" id="GO:0071397">
    <property type="term" value="P:cellular response to cholesterol"/>
    <property type="evidence" value="ECO:0000250"/>
    <property type="project" value="UniProtKB"/>
</dbReference>
<dbReference type="GO" id="GO:0071333">
    <property type="term" value="P:cellular response to glucose stimulus"/>
    <property type="evidence" value="ECO:0000250"/>
    <property type="project" value="UniProtKB"/>
</dbReference>
<dbReference type="GO" id="GO:0006707">
    <property type="term" value="P:cholesterol catabolic process"/>
    <property type="evidence" value="ECO:0000250"/>
    <property type="project" value="UniProtKB"/>
</dbReference>
<dbReference type="GO" id="GO:0042632">
    <property type="term" value="P:cholesterol homeostasis"/>
    <property type="evidence" value="ECO:0000250"/>
    <property type="project" value="UniProtKB"/>
</dbReference>
<dbReference type="GO" id="GO:0070857">
    <property type="term" value="P:regulation of bile acid biosynthetic process"/>
    <property type="evidence" value="ECO:0000250"/>
    <property type="project" value="UniProtKB"/>
</dbReference>
<dbReference type="CDD" id="cd20631">
    <property type="entry name" value="CYP7A1"/>
    <property type="match status" value="1"/>
</dbReference>
<dbReference type="FunFam" id="1.10.630.10:FF:000034">
    <property type="entry name" value="Cholesterol 7-alpha-monooxygenase"/>
    <property type="match status" value="1"/>
</dbReference>
<dbReference type="Gene3D" id="1.10.630.10">
    <property type="entry name" value="Cytochrome P450"/>
    <property type="match status" value="1"/>
</dbReference>
<dbReference type="InterPro" id="IPR030681">
    <property type="entry name" value="Cholesterol_7a_monooxygenase"/>
</dbReference>
<dbReference type="InterPro" id="IPR050529">
    <property type="entry name" value="CYP450_sterol_14alpha_dmase"/>
</dbReference>
<dbReference type="InterPro" id="IPR001128">
    <property type="entry name" value="Cyt_P450"/>
</dbReference>
<dbReference type="InterPro" id="IPR017972">
    <property type="entry name" value="Cyt_P450_CS"/>
</dbReference>
<dbReference type="InterPro" id="IPR024204">
    <property type="entry name" value="Cyt_P450_CYP7A1-type"/>
</dbReference>
<dbReference type="InterPro" id="IPR002403">
    <property type="entry name" value="Cyt_P450_E_grp-IV"/>
</dbReference>
<dbReference type="InterPro" id="IPR036396">
    <property type="entry name" value="Cyt_P450_sf"/>
</dbReference>
<dbReference type="PANTHER" id="PTHR24304:SF1">
    <property type="entry name" value="CYTOCHROME P450 7A1"/>
    <property type="match status" value="1"/>
</dbReference>
<dbReference type="PANTHER" id="PTHR24304">
    <property type="entry name" value="CYTOCHROME P450 FAMILY 7"/>
    <property type="match status" value="1"/>
</dbReference>
<dbReference type="Pfam" id="PF00067">
    <property type="entry name" value="p450"/>
    <property type="match status" value="1"/>
</dbReference>
<dbReference type="PIRSF" id="PIRSF500625">
    <property type="entry name" value="Cytochrome_CYP7A1"/>
    <property type="match status" value="1"/>
</dbReference>
<dbReference type="PIRSF" id="PIRSF000047">
    <property type="entry name" value="Cytochrome_CYPVIIA1"/>
    <property type="match status" value="1"/>
</dbReference>
<dbReference type="PRINTS" id="PR00465">
    <property type="entry name" value="EP450IV"/>
</dbReference>
<dbReference type="PRINTS" id="PR00385">
    <property type="entry name" value="P450"/>
</dbReference>
<dbReference type="SUPFAM" id="SSF48264">
    <property type="entry name" value="Cytochrome P450"/>
    <property type="match status" value="1"/>
</dbReference>
<dbReference type="PROSITE" id="PS00086">
    <property type="entry name" value="CYTOCHROME_P450"/>
    <property type="match status" value="1"/>
</dbReference>
<evidence type="ECO:0000250" key="1">
    <source>
        <dbReference type="UniProtKB" id="P22680"/>
    </source>
</evidence>
<evidence type="ECO:0000255" key="2"/>
<evidence type="ECO:0000305" key="3"/>
<keyword id="KW-0153">Cholesterol metabolism</keyword>
<keyword id="KW-0256">Endoplasmic reticulum</keyword>
<keyword id="KW-0349">Heme</keyword>
<keyword id="KW-0408">Iron</keyword>
<keyword id="KW-0443">Lipid metabolism</keyword>
<keyword id="KW-0472">Membrane</keyword>
<keyword id="KW-0479">Metal-binding</keyword>
<keyword id="KW-0492">Microsome</keyword>
<keyword id="KW-0503">Monooxygenase</keyword>
<keyword id="KW-0560">Oxidoreductase</keyword>
<keyword id="KW-1185">Reference proteome</keyword>
<keyword id="KW-0753">Steroid metabolism</keyword>
<keyword id="KW-1207">Sterol metabolism</keyword>
<keyword id="KW-0812">Transmembrane</keyword>
<keyword id="KW-1133">Transmembrane helix</keyword>
<accession>O46491</accession>
<protein>
    <recommendedName>
        <fullName evidence="1">Cytochrome P450 7A1</fullName>
    </recommendedName>
    <alternativeName>
        <fullName evidence="1">24-hydroxycholesterol 7-alpha-hydroxylase</fullName>
        <ecNumber evidence="1">1.14.14.26</ecNumber>
    </alternativeName>
    <alternativeName>
        <fullName>CYPVII</fullName>
    </alternativeName>
    <alternativeName>
        <fullName evidence="1">Cholesterol 7-alpha-hydroxylase</fullName>
    </alternativeName>
    <alternativeName>
        <fullName>Cholesterol 7-alpha-monooxygenase</fullName>
        <ecNumber evidence="1">1.14.14.23</ecNumber>
    </alternativeName>
</protein>
<gene>
    <name type="primary">CYP7A1</name>
    <name type="synonym">CYP7</name>
</gene>
<feature type="chain" id="PRO_0000051903" description="Cytochrome P450 7A1">
    <location>
        <begin position="1"/>
        <end position="501"/>
    </location>
</feature>
<feature type="transmembrane region" description="Helical" evidence="2">
    <location>
        <begin position="4"/>
        <end position="24"/>
    </location>
</feature>
<feature type="binding site" description="axial binding residue" evidence="1">
    <location>
        <position position="441"/>
    </location>
    <ligand>
        <name>heme</name>
        <dbReference type="ChEBI" id="CHEBI:30413"/>
    </ligand>
    <ligandPart>
        <name>Fe</name>
        <dbReference type="ChEBI" id="CHEBI:18248"/>
    </ligandPart>
</feature>
<reference key="1">
    <citation type="submission" date="1997-08" db="EMBL/GenBank/DDBJ databases">
        <title>Structure of the porcine cholesterol 7 alpha-hydroxylase gene.</title>
        <authorList>
            <person name="Ishimura-Oka K."/>
            <person name="Li C.M."/>
            <person name="Chang B.H.J."/>
            <person name="Pond W.G."/>
            <person name="Oka K."/>
            <person name="Chan L."/>
        </authorList>
    </citation>
    <scope>NUCLEOTIDE SEQUENCE [GENOMIC DNA]</scope>
</reference>